<feature type="chain" id="PRO_1000026048" description="Thiazole synthase">
    <location>
        <begin position="1"/>
        <end position="254"/>
    </location>
</feature>
<feature type="active site" description="Schiff-base intermediate with DXP" evidence="1">
    <location>
        <position position="95"/>
    </location>
</feature>
<feature type="binding site" evidence="1">
    <location>
        <position position="156"/>
    </location>
    <ligand>
        <name>1-deoxy-D-xylulose 5-phosphate</name>
        <dbReference type="ChEBI" id="CHEBI:57792"/>
    </ligand>
</feature>
<feature type="binding site" evidence="1">
    <location>
        <begin position="182"/>
        <end position="183"/>
    </location>
    <ligand>
        <name>1-deoxy-D-xylulose 5-phosphate</name>
        <dbReference type="ChEBI" id="CHEBI:57792"/>
    </ligand>
</feature>
<feature type="binding site" evidence="1">
    <location>
        <begin position="204"/>
        <end position="205"/>
    </location>
    <ligand>
        <name>1-deoxy-D-xylulose 5-phosphate</name>
        <dbReference type="ChEBI" id="CHEBI:57792"/>
    </ligand>
</feature>
<proteinExistence type="inferred from homology"/>
<gene>
    <name evidence="1" type="primary">thiG</name>
    <name type="ordered locus">Shewmr7_2093</name>
</gene>
<comment type="function">
    <text evidence="1">Catalyzes the rearrangement of 1-deoxy-D-xylulose 5-phosphate (DXP) to produce the thiazole phosphate moiety of thiamine. Sulfur is provided by the thiocarboxylate moiety of the carrier protein ThiS. In vitro, sulfur can be provided by H(2)S.</text>
</comment>
<comment type="catalytic activity">
    <reaction evidence="1">
        <text>[ThiS sulfur-carrier protein]-C-terminal-Gly-aminoethanethioate + 2-iminoacetate + 1-deoxy-D-xylulose 5-phosphate = [ThiS sulfur-carrier protein]-C-terminal Gly-Gly + 2-[(2R,5Z)-2-carboxy-4-methylthiazol-5(2H)-ylidene]ethyl phosphate + 2 H2O + H(+)</text>
        <dbReference type="Rhea" id="RHEA:26297"/>
        <dbReference type="Rhea" id="RHEA-COMP:12909"/>
        <dbReference type="Rhea" id="RHEA-COMP:19908"/>
        <dbReference type="ChEBI" id="CHEBI:15377"/>
        <dbReference type="ChEBI" id="CHEBI:15378"/>
        <dbReference type="ChEBI" id="CHEBI:57792"/>
        <dbReference type="ChEBI" id="CHEBI:62899"/>
        <dbReference type="ChEBI" id="CHEBI:77846"/>
        <dbReference type="ChEBI" id="CHEBI:90778"/>
        <dbReference type="ChEBI" id="CHEBI:232372"/>
        <dbReference type="EC" id="2.8.1.10"/>
    </reaction>
</comment>
<comment type="pathway">
    <text evidence="1">Cofactor biosynthesis; thiamine diphosphate biosynthesis.</text>
</comment>
<comment type="subunit">
    <text evidence="1">Homotetramer. Forms heterodimers with either ThiH or ThiS.</text>
</comment>
<comment type="subcellular location">
    <subcellularLocation>
        <location evidence="1">Cytoplasm</location>
    </subcellularLocation>
</comment>
<comment type="similarity">
    <text evidence="1">Belongs to the ThiG family.</text>
</comment>
<dbReference type="EC" id="2.8.1.10" evidence="1"/>
<dbReference type="EMBL" id="CP000444">
    <property type="protein sequence ID" value="ABI43081.1"/>
    <property type="molecule type" value="Genomic_DNA"/>
</dbReference>
<dbReference type="SMR" id="Q0HUX4"/>
<dbReference type="KEGG" id="shm:Shewmr7_2093"/>
<dbReference type="HOGENOM" id="CLU_062233_1_0_6"/>
<dbReference type="UniPathway" id="UPA00060"/>
<dbReference type="GO" id="GO:0005737">
    <property type="term" value="C:cytoplasm"/>
    <property type="evidence" value="ECO:0007669"/>
    <property type="project" value="UniProtKB-SubCell"/>
</dbReference>
<dbReference type="GO" id="GO:1990107">
    <property type="term" value="F:thiazole synthase activity"/>
    <property type="evidence" value="ECO:0007669"/>
    <property type="project" value="UniProtKB-EC"/>
</dbReference>
<dbReference type="GO" id="GO:0009229">
    <property type="term" value="P:thiamine diphosphate biosynthetic process"/>
    <property type="evidence" value="ECO:0007669"/>
    <property type="project" value="UniProtKB-UniRule"/>
</dbReference>
<dbReference type="CDD" id="cd04728">
    <property type="entry name" value="ThiG"/>
    <property type="match status" value="1"/>
</dbReference>
<dbReference type="FunFam" id="3.20.20.70:FF:000049">
    <property type="entry name" value="Thiazole synthase"/>
    <property type="match status" value="1"/>
</dbReference>
<dbReference type="Gene3D" id="3.20.20.70">
    <property type="entry name" value="Aldolase class I"/>
    <property type="match status" value="1"/>
</dbReference>
<dbReference type="HAMAP" id="MF_00443">
    <property type="entry name" value="ThiG"/>
    <property type="match status" value="1"/>
</dbReference>
<dbReference type="InterPro" id="IPR013785">
    <property type="entry name" value="Aldolase_TIM"/>
</dbReference>
<dbReference type="InterPro" id="IPR033983">
    <property type="entry name" value="Thiazole_synthase_ThiG"/>
</dbReference>
<dbReference type="InterPro" id="IPR008867">
    <property type="entry name" value="ThiG"/>
</dbReference>
<dbReference type="PANTHER" id="PTHR34266">
    <property type="entry name" value="THIAZOLE SYNTHASE"/>
    <property type="match status" value="1"/>
</dbReference>
<dbReference type="PANTHER" id="PTHR34266:SF2">
    <property type="entry name" value="THIAZOLE SYNTHASE"/>
    <property type="match status" value="1"/>
</dbReference>
<dbReference type="Pfam" id="PF05690">
    <property type="entry name" value="ThiG"/>
    <property type="match status" value="1"/>
</dbReference>
<dbReference type="SUPFAM" id="SSF110399">
    <property type="entry name" value="ThiG-like"/>
    <property type="match status" value="1"/>
</dbReference>
<protein>
    <recommendedName>
        <fullName evidence="1">Thiazole synthase</fullName>
        <ecNumber evidence="1">2.8.1.10</ecNumber>
    </recommendedName>
</protein>
<reference key="1">
    <citation type="submission" date="2006-08" db="EMBL/GenBank/DDBJ databases">
        <title>Complete sequence of chromosome 1 of Shewanella sp. MR-7.</title>
        <authorList>
            <person name="Copeland A."/>
            <person name="Lucas S."/>
            <person name="Lapidus A."/>
            <person name="Barry K."/>
            <person name="Detter J.C."/>
            <person name="Glavina del Rio T."/>
            <person name="Hammon N."/>
            <person name="Israni S."/>
            <person name="Dalin E."/>
            <person name="Tice H."/>
            <person name="Pitluck S."/>
            <person name="Kiss H."/>
            <person name="Brettin T."/>
            <person name="Bruce D."/>
            <person name="Han C."/>
            <person name="Tapia R."/>
            <person name="Gilna P."/>
            <person name="Schmutz J."/>
            <person name="Larimer F."/>
            <person name="Land M."/>
            <person name="Hauser L."/>
            <person name="Kyrpides N."/>
            <person name="Mikhailova N."/>
            <person name="Nealson K."/>
            <person name="Konstantinidis K."/>
            <person name="Klappenbach J."/>
            <person name="Tiedje J."/>
            <person name="Richardson P."/>
        </authorList>
    </citation>
    <scope>NUCLEOTIDE SEQUENCE [LARGE SCALE GENOMIC DNA]</scope>
    <source>
        <strain>MR-7</strain>
    </source>
</reference>
<organism>
    <name type="scientific">Shewanella sp. (strain MR-7)</name>
    <dbReference type="NCBI Taxonomy" id="60481"/>
    <lineage>
        <taxon>Bacteria</taxon>
        <taxon>Pseudomonadati</taxon>
        <taxon>Pseudomonadota</taxon>
        <taxon>Gammaproteobacteria</taxon>
        <taxon>Alteromonadales</taxon>
        <taxon>Shewanellaceae</taxon>
        <taxon>Shewanella</taxon>
    </lineage>
</organism>
<keyword id="KW-0963">Cytoplasm</keyword>
<keyword id="KW-0704">Schiff base</keyword>
<keyword id="KW-0784">Thiamine biosynthesis</keyword>
<keyword id="KW-0808">Transferase</keyword>
<sequence>MLTIAGVEFESRLFTGTGKFSSSQLMLESIKASQSQLVTVAMKRIDLKTGADDLLSPLRQAGVRLLPNTSGARNAKEAIFAAELAREMLGTQWVKLEIHPDPKYLMPDAVETLAAAKTLCERGFIVMPYVHADPVLCRRLEEVGCAAVMPLASPIGTNQGLVTEPFIKMIIEQAKVPVVIDAGIGAPSHAAHAMELGADAVLVNTAIASSASPIEMALCFKDAVNCGRRAFEAGLGRVQTQAVHTSPLTGFLQQ</sequence>
<accession>Q0HUX4</accession>
<evidence type="ECO:0000255" key="1">
    <source>
        <dbReference type="HAMAP-Rule" id="MF_00443"/>
    </source>
</evidence>
<name>THIG_SHESR</name>